<comment type="function">
    <text evidence="1">Catalyzes the reversible transfer of the terminal phosphate group between ATP and AMP. Plays an important role in cellular energy homeostasis and in adenine nucleotide metabolism.</text>
</comment>
<comment type="catalytic activity">
    <reaction evidence="1">
        <text>AMP + ATP = 2 ADP</text>
        <dbReference type="Rhea" id="RHEA:12973"/>
        <dbReference type="ChEBI" id="CHEBI:30616"/>
        <dbReference type="ChEBI" id="CHEBI:456215"/>
        <dbReference type="ChEBI" id="CHEBI:456216"/>
        <dbReference type="EC" id="2.7.4.3"/>
    </reaction>
</comment>
<comment type="pathway">
    <text evidence="1">Purine metabolism; AMP biosynthesis via salvage pathway; AMP from ADP: step 1/1.</text>
</comment>
<comment type="subunit">
    <text evidence="1">Monomer.</text>
</comment>
<comment type="subcellular location">
    <subcellularLocation>
        <location evidence="1">Cytoplasm</location>
    </subcellularLocation>
</comment>
<comment type="domain">
    <text evidence="1">Consists of three domains, a large central CORE domain and two small peripheral domains, NMPbind and LID, which undergo movements during catalysis. The LID domain closes over the site of phosphoryl transfer upon ATP binding. Assembling and dissambling the active center during each catalytic cycle provides an effective means to prevent ATP hydrolysis. Some bacteria have evolved a zinc-coordinating structure that stabilizes the LID domain.</text>
</comment>
<comment type="similarity">
    <text evidence="1">Belongs to the adenylate kinase family.</text>
</comment>
<organism>
    <name type="scientific">Trichlorobacter lovleyi (strain ATCC BAA-1151 / DSM 17278 / SZ)</name>
    <name type="common">Geobacter lovleyi</name>
    <dbReference type="NCBI Taxonomy" id="398767"/>
    <lineage>
        <taxon>Bacteria</taxon>
        <taxon>Pseudomonadati</taxon>
        <taxon>Thermodesulfobacteriota</taxon>
        <taxon>Desulfuromonadia</taxon>
        <taxon>Geobacterales</taxon>
        <taxon>Geobacteraceae</taxon>
        <taxon>Trichlorobacter</taxon>
    </lineage>
</organism>
<feature type="chain" id="PRO_1000100567" description="Adenylate kinase">
    <location>
        <begin position="1"/>
        <end position="214"/>
    </location>
</feature>
<feature type="region of interest" description="NMP" evidence="1">
    <location>
        <begin position="30"/>
        <end position="59"/>
    </location>
</feature>
<feature type="region of interest" description="LID" evidence="1">
    <location>
        <begin position="126"/>
        <end position="163"/>
    </location>
</feature>
<feature type="binding site" evidence="1">
    <location>
        <begin position="10"/>
        <end position="15"/>
    </location>
    <ligand>
        <name>ATP</name>
        <dbReference type="ChEBI" id="CHEBI:30616"/>
    </ligand>
</feature>
<feature type="binding site" evidence="1">
    <location>
        <position position="31"/>
    </location>
    <ligand>
        <name>AMP</name>
        <dbReference type="ChEBI" id="CHEBI:456215"/>
    </ligand>
</feature>
<feature type="binding site" evidence="1">
    <location>
        <position position="36"/>
    </location>
    <ligand>
        <name>AMP</name>
        <dbReference type="ChEBI" id="CHEBI:456215"/>
    </ligand>
</feature>
<feature type="binding site" evidence="1">
    <location>
        <begin position="57"/>
        <end position="59"/>
    </location>
    <ligand>
        <name>AMP</name>
        <dbReference type="ChEBI" id="CHEBI:456215"/>
    </ligand>
</feature>
<feature type="binding site" evidence="1">
    <location>
        <begin position="85"/>
        <end position="88"/>
    </location>
    <ligand>
        <name>AMP</name>
        <dbReference type="ChEBI" id="CHEBI:456215"/>
    </ligand>
</feature>
<feature type="binding site" evidence="1">
    <location>
        <position position="92"/>
    </location>
    <ligand>
        <name>AMP</name>
        <dbReference type="ChEBI" id="CHEBI:456215"/>
    </ligand>
</feature>
<feature type="binding site" evidence="1">
    <location>
        <position position="127"/>
    </location>
    <ligand>
        <name>ATP</name>
        <dbReference type="ChEBI" id="CHEBI:30616"/>
    </ligand>
</feature>
<feature type="binding site" evidence="1">
    <location>
        <position position="130"/>
    </location>
    <ligand>
        <name>Zn(2+)</name>
        <dbReference type="ChEBI" id="CHEBI:29105"/>
        <note>structural</note>
    </ligand>
</feature>
<feature type="binding site" evidence="1">
    <location>
        <position position="133"/>
    </location>
    <ligand>
        <name>Zn(2+)</name>
        <dbReference type="ChEBI" id="CHEBI:29105"/>
        <note>structural</note>
    </ligand>
</feature>
<feature type="binding site" evidence="1">
    <location>
        <position position="150"/>
    </location>
    <ligand>
        <name>Zn(2+)</name>
        <dbReference type="ChEBI" id="CHEBI:29105"/>
        <note>structural</note>
    </ligand>
</feature>
<feature type="binding site" evidence="1">
    <location>
        <position position="153"/>
    </location>
    <ligand>
        <name>Zn(2+)</name>
        <dbReference type="ChEBI" id="CHEBI:29105"/>
        <note>structural</note>
    </ligand>
</feature>
<feature type="binding site" evidence="1">
    <location>
        <position position="160"/>
    </location>
    <ligand>
        <name>AMP</name>
        <dbReference type="ChEBI" id="CHEBI:456215"/>
    </ligand>
</feature>
<feature type="binding site" evidence="1">
    <location>
        <position position="171"/>
    </location>
    <ligand>
        <name>AMP</name>
        <dbReference type="ChEBI" id="CHEBI:456215"/>
    </ligand>
</feature>
<feature type="binding site" evidence="1">
    <location>
        <position position="199"/>
    </location>
    <ligand>
        <name>ATP</name>
        <dbReference type="ChEBI" id="CHEBI:30616"/>
    </ligand>
</feature>
<evidence type="ECO:0000255" key="1">
    <source>
        <dbReference type="HAMAP-Rule" id="MF_00235"/>
    </source>
</evidence>
<protein>
    <recommendedName>
        <fullName evidence="1">Adenylate kinase</fullName>
        <shortName evidence="1">AK</shortName>
        <ecNumber evidence="1">2.7.4.3</ecNumber>
    </recommendedName>
    <alternativeName>
        <fullName evidence="1">ATP-AMP transphosphorylase</fullName>
    </alternativeName>
    <alternativeName>
        <fullName evidence="1">ATP:AMP phosphotransferase</fullName>
    </alternativeName>
    <alternativeName>
        <fullName evidence="1">Adenylate monophosphate kinase</fullName>
    </alternativeName>
</protein>
<gene>
    <name evidence="1" type="primary">adk</name>
    <name type="ordered locus">Glov_1367</name>
</gene>
<accession>B3E851</accession>
<sequence>MNLILFGPPGAGKGTQAQFLVETYGIPQISTGDMLRAAVKAGTPLGVKAQEIMIQGGLVSDDIVLGIVAERLAQDDCAAGFVLDGFPRTIPQADALSVILKQVGRAIDHVISLEVDGEEIVNRLSGRRSCSSCGKGYHLVFDPPLRAGVCDVCGSGLVQRADDQEETVRNRLLVYEQQTAPLKDYYRSRQVLCSIPGIGSIVEIQQRIAAALVE</sequence>
<name>KAD_TRIL1</name>
<proteinExistence type="inferred from homology"/>
<keyword id="KW-0067">ATP-binding</keyword>
<keyword id="KW-0963">Cytoplasm</keyword>
<keyword id="KW-0418">Kinase</keyword>
<keyword id="KW-0479">Metal-binding</keyword>
<keyword id="KW-0545">Nucleotide biosynthesis</keyword>
<keyword id="KW-0547">Nucleotide-binding</keyword>
<keyword id="KW-1185">Reference proteome</keyword>
<keyword id="KW-0808">Transferase</keyword>
<keyword id="KW-0862">Zinc</keyword>
<dbReference type="EC" id="2.7.4.3" evidence="1"/>
<dbReference type="EMBL" id="CP001089">
    <property type="protein sequence ID" value="ACD95088.1"/>
    <property type="molecule type" value="Genomic_DNA"/>
</dbReference>
<dbReference type="RefSeq" id="WP_012469433.1">
    <property type="nucleotide sequence ID" value="NC_010814.1"/>
</dbReference>
<dbReference type="SMR" id="B3E851"/>
<dbReference type="STRING" id="398767.Glov_1367"/>
<dbReference type="KEGG" id="glo:Glov_1367"/>
<dbReference type="eggNOG" id="COG0563">
    <property type="taxonomic scope" value="Bacteria"/>
</dbReference>
<dbReference type="HOGENOM" id="CLU_032354_1_2_7"/>
<dbReference type="OrthoDB" id="9805030at2"/>
<dbReference type="UniPathway" id="UPA00588">
    <property type="reaction ID" value="UER00649"/>
</dbReference>
<dbReference type="Proteomes" id="UP000002420">
    <property type="component" value="Chromosome"/>
</dbReference>
<dbReference type="GO" id="GO:0005737">
    <property type="term" value="C:cytoplasm"/>
    <property type="evidence" value="ECO:0007669"/>
    <property type="project" value="UniProtKB-SubCell"/>
</dbReference>
<dbReference type="GO" id="GO:0004017">
    <property type="term" value="F:adenylate kinase activity"/>
    <property type="evidence" value="ECO:0007669"/>
    <property type="project" value="UniProtKB-UniRule"/>
</dbReference>
<dbReference type="GO" id="GO:0005524">
    <property type="term" value="F:ATP binding"/>
    <property type="evidence" value="ECO:0007669"/>
    <property type="project" value="UniProtKB-UniRule"/>
</dbReference>
<dbReference type="GO" id="GO:0008270">
    <property type="term" value="F:zinc ion binding"/>
    <property type="evidence" value="ECO:0007669"/>
    <property type="project" value="UniProtKB-UniRule"/>
</dbReference>
<dbReference type="GO" id="GO:0044209">
    <property type="term" value="P:AMP salvage"/>
    <property type="evidence" value="ECO:0007669"/>
    <property type="project" value="UniProtKB-UniRule"/>
</dbReference>
<dbReference type="CDD" id="cd01428">
    <property type="entry name" value="ADK"/>
    <property type="match status" value="1"/>
</dbReference>
<dbReference type="FunFam" id="3.40.50.300:FF:000106">
    <property type="entry name" value="Adenylate kinase mitochondrial"/>
    <property type="match status" value="1"/>
</dbReference>
<dbReference type="Gene3D" id="3.40.50.300">
    <property type="entry name" value="P-loop containing nucleotide triphosphate hydrolases"/>
    <property type="match status" value="1"/>
</dbReference>
<dbReference type="HAMAP" id="MF_00235">
    <property type="entry name" value="Adenylate_kinase_Adk"/>
    <property type="match status" value="1"/>
</dbReference>
<dbReference type="InterPro" id="IPR006259">
    <property type="entry name" value="Adenyl_kin_sub"/>
</dbReference>
<dbReference type="InterPro" id="IPR000850">
    <property type="entry name" value="Adenylat/UMP-CMP_kin"/>
</dbReference>
<dbReference type="InterPro" id="IPR033690">
    <property type="entry name" value="Adenylat_kinase_CS"/>
</dbReference>
<dbReference type="InterPro" id="IPR007862">
    <property type="entry name" value="Adenylate_kinase_lid-dom"/>
</dbReference>
<dbReference type="InterPro" id="IPR027417">
    <property type="entry name" value="P-loop_NTPase"/>
</dbReference>
<dbReference type="NCBIfam" id="TIGR01351">
    <property type="entry name" value="adk"/>
    <property type="match status" value="1"/>
</dbReference>
<dbReference type="NCBIfam" id="NF001379">
    <property type="entry name" value="PRK00279.1-1"/>
    <property type="match status" value="1"/>
</dbReference>
<dbReference type="NCBIfam" id="NF001380">
    <property type="entry name" value="PRK00279.1-2"/>
    <property type="match status" value="1"/>
</dbReference>
<dbReference type="NCBIfam" id="NF001381">
    <property type="entry name" value="PRK00279.1-3"/>
    <property type="match status" value="1"/>
</dbReference>
<dbReference type="NCBIfam" id="NF011100">
    <property type="entry name" value="PRK14527.1"/>
    <property type="match status" value="1"/>
</dbReference>
<dbReference type="PANTHER" id="PTHR23359">
    <property type="entry name" value="NUCLEOTIDE KINASE"/>
    <property type="match status" value="1"/>
</dbReference>
<dbReference type="Pfam" id="PF00406">
    <property type="entry name" value="ADK"/>
    <property type="match status" value="1"/>
</dbReference>
<dbReference type="Pfam" id="PF05191">
    <property type="entry name" value="ADK_lid"/>
    <property type="match status" value="1"/>
</dbReference>
<dbReference type="PRINTS" id="PR00094">
    <property type="entry name" value="ADENYLTKNASE"/>
</dbReference>
<dbReference type="SUPFAM" id="SSF52540">
    <property type="entry name" value="P-loop containing nucleoside triphosphate hydrolases"/>
    <property type="match status" value="1"/>
</dbReference>
<dbReference type="PROSITE" id="PS00113">
    <property type="entry name" value="ADENYLATE_KINASE"/>
    <property type="match status" value="1"/>
</dbReference>
<reference key="1">
    <citation type="submission" date="2008-05" db="EMBL/GenBank/DDBJ databases">
        <title>Complete sequence of chromosome of Geobacter lovleyi SZ.</title>
        <authorList>
            <consortium name="US DOE Joint Genome Institute"/>
            <person name="Lucas S."/>
            <person name="Copeland A."/>
            <person name="Lapidus A."/>
            <person name="Glavina del Rio T."/>
            <person name="Dalin E."/>
            <person name="Tice H."/>
            <person name="Bruce D."/>
            <person name="Goodwin L."/>
            <person name="Pitluck S."/>
            <person name="Chertkov O."/>
            <person name="Meincke L."/>
            <person name="Brettin T."/>
            <person name="Detter J.C."/>
            <person name="Han C."/>
            <person name="Tapia R."/>
            <person name="Kuske C.R."/>
            <person name="Schmutz J."/>
            <person name="Larimer F."/>
            <person name="Land M."/>
            <person name="Hauser L."/>
            <person name="Kyrpides N."/>
            <person name="Mikhailova N."/>
            <person name="Sung Y."/>
            <person name="Fletcher K.E."/>
            <person name="Ritalahti K.M."/>
            <person name="Loeffler F.E."/>
            <person name="Richardson P."/>
        </authorList>
    </citation>
    <scope>NUCLEOTIDE SEQUENCE [LARGE SCALE GENOMIC DNA]</scope>
    <source>
        <strain>ATCC BAA-1151 / DSM 17278 / SZ</strain>
    </source>
</reference>